<dbReference type="EMBL" id="CP000382">
    <property type="protein sequence ID" value="ABK62103.1"/>
    <property type="molecule type" value="Genomic_DNA"/>
</dbReference>
<dbReference type="SMR" id="A0PZG4"/>
<dbReference type="STRING" id="386415.NT01CX_1687"/>
<dbReference type="KEGG" id="cno:NT01CX_1687"/>
<dbReference type="eggNOG" id="COG2003">
    <property type="taxonomic scope" value="Bacteria"/>
</dbReference>
<dbReference type="HOGENOM" id="CLU_073529_0_2_9"/>
<dbReference type="Proteomes" id="UP000008220">
    <property type="component" value="Chromosome"/>
</dbReference>
<dbReference type="GO" id="GO:0046872">
    <property type="term" value="F:metal ion binding"/>
    <property type="evidence" value="ECO:0007669"/>
    <property type="project" value="UniProtKB-KW"/>
</dbReference>
<dbReference type="GO" id="GO:0008237">
    <property type="term" value="F:metallopeptidase activity"/>
    <property type="evidence" value="ECO:0007669"/>
    <property type="project" value="UniProtKB-KW"/>
</dbReference>
<dbReference type="GO" id="GO:0006508">
    <property type="term" value="P:proteolysis"/>
    <property type="evidence" value="ECO:0007669"/>
    <property type="project" value="UniProtKB-KW"/>
</dbReference>
<dbReference type="CDD" id="cd08071">
    <property type="entry name" value="MPN_DUF2466"/>
    <property type="match status" value="1"/>
</dbReference>
<dbReference type="Gene3D" id="3.40.140.10">
    <property type="entry name" value="Cytidine Deaminase, domain 2"/>
    <property type="match status" value="1"/>
</dbReference>
<dbReference type="InterPro" id="IPR037518">
    <property type="entry name" value="MPN"/>
</dbReference>
<dbReference type="InterPro" id="IPR025657">
    <property type="entry name" value="RadC_JAB"/>
</dbReference>
<dbReference type="InterPro" id="IPR010994">
    <property type="entry name" value="RuvA_2-like"/>
</dbReference>
<dbReference type="InterPro" id="IPR001405">
    <property type="entry name" value="UPF0758"/>
</dbReference>
<dbReference type="InterPro" id="IPR020891">
    <property type="entry name" value="UPF0758_CS"/>
</dbReference>
<dbReference type="InterPro" id="IPR046778">
    <property type="entry name" value="UPF0758_N"/>
</dbReference>
<dbReference type="NCBIfam" id="NF000642">
    <property type="entry name" value="PRK00024.1"/>
    <property type="match status" value="1"/>
</dbReference>
<dbReference type="NCBIfam" id="TIGR00608">
    <property type="entry name" value="radc"/>
    <property type="match status" value="1"/>
</dbReference>
<dbReference type="PANTHER" id="PTHR30471">
    <property type="entry name" value="DNA REPAIR PROTEIN RADC"/>
    <property type="match status" value="1"/>
</dbReference>
<dbReference type="PANTHER" id="PTHR30471:SF3">
    <property type="entry name" value="UPF0758 PROTEIN YEES-RELATED"/>
    <property type="match status" value="1"/>
</dbReference>
<dbReference type="Pfam" id="PF04002">
    <property type="entry name" value="RadC"/>
    <property type="match status" value="1"/>
</dbReference>
<dbReference type="Pfam" id="PF20582">
    <property type="entry name" value="UPF0758_N"/>
    <property type="match status" value="1"/>
</dbReference>
<dbReference type="SUPFAM" id="SSF102712">
    <property type="entry name" value="JAB1/MPN domain"/>
    <property type="match status" value="1"/>
</dbReference>
<dbReference type="SUPFAM" id="SSF47781">
    <property type="entry name" value="RuvA domain 2-like"/>
    <property type="match status" value="1"/>
</dbReference>
<dbReference type="PROSITE" id="PS50249">
    <property type="entry name" value="MPN"/>
    <property type="match status" value="1"/>
</dbReference>
<dbReference type="PROSITE" id="PS01302">
    <property type="entry name" value="UPF0758"/>
    <property type="match status" value="1"/>
</dbReference>
<name>Y1687_CLONN</name>
<accession>A0PZG4</accession>
<gene>
    <name type="ordered locus">NT01CX_1687</name>
</gene>
<evidence type="ECO:0000255" key="1">
    <source>
        <dbReference type="PROSITE-ProRule" id="PRU01182"/>
    </source>
</evidence>
<evidence type="ECO:0000305" key="2"/>
<comment type="similarity">
    <text evidence="2">Belongs to the UPF0758 family.</text>
</comment>
<feature type="chain" id="PRO_1000001653" description="UPF0758 protein NT01CX_1687">
    <location>
        <begin position="1"/>
        <end position="228"/>
    </location>
</feature>
<feature type="domain" description="MPN" evidence="1">
    <location>
        <begin position="106"/>
        <end position="228"/>
    </location>
</feature>
<feature type="short sequence motif" description="JAMM motif" evidence="1">
    <location>
        <begin position="177"/>
        <end position="190"/>
    </location>
</feature>
<feature type="binding site" evidence="1">
    <location>
        <position position="177"/>
    </location>
    <ligand>
        <name>Zn(2+)</name>
        <dbReference type="ChEBI" id="CHEBI:29105"/>
        <note>catalytic</note>
    </ligand>
</feature>
<feature type="binding site" evidence="1">
    <location>
        <position position="179"/>
    </location>
    <ligand>
        <name>Zn(2+)</name>
        <dbReference type="ChEBI" id="CHEBI:29105"/>
        <note>catalytic</note>
    </ligand>
</feature>
<feature type="binding site" evidence="1">
    <location>
        <position position="190"/>
    </location>
    <ligand>
        <name>Zn(2+)</name>
        <dbReference type="ChEBI" id="CHEBI:29105"/>
        <note>catalytic</note>
    </ligand>
</feature>
<reference key="1">
    <citation type="journal article" date="2006" name="Nat. Biotechnol.">
        <title>The genome and transcriptomes of the anti-tumor agent Clostridium novyi-NT.</title>
        <authorList>
            <person name="Bettegowda C."/>
            <person name="Huang X."/>
            <person name="Lin J."/>
            <person name="Cheong I."/>
            <person name="Kohli M."/>
            <person name="Szabo S.A."/>
            <person name="Zhang X."/>
            <person name="Diaz L.A. Jr."/>
            <person name="Velculescu V.E."/>
            <person name="Parmigiani G."/>
            <person name="Kinzler K.W."/>
            <person name="Vogelstein B."/>
            <person name="Zhou S."/>
        </authorList>
    </citation>
    <scope>NUCLEOTIDE SEQUENCE [LARGE SCALE GENOMIC DNA]</scope>
    <source>
        <strain>NT</strain>
    </source>
</reference>
<keyword id="KW-0378">Hydrolase</keyword>
<keyword id="KW-0479">Metal-binding</keyword>
<keyword id="KW-0482">Metalloprotease</keyword>
<keyword id="KW-0645">Protease</keyword>
<keyword id="KW-1185">Reference proteome</keyword>
<keyword id="KW-0862">Zinc</keyword>
<organism>
    <name type="scientific">Clostridium novyi (strain NT)</name>
    <dbReference type="NCBI Taxonomy" id="386415"/>
    <lineage>
        <taxon>Bacteria</taxon>
        <taxon>Bacillati</taxon>
        <taxon>Bacillota</taxon>
        <taxon>Clostridia</taxon>
        <taxon>Eubacteriales</taxon>
        <taxon>Clostridiaceae</taxon>
        <taxon>Clostridium</taxon>
    </lineage>
</organism>
<protein>
    <recommendedName>
        <fullName>UPF0758 protein NT01CX_1687</fullName>
    </recommendedName>
</protein>
<proteinExistence type="inferred from homology"/>
<sequence length="228" mass="25046">MFNTLKILDLPENERPRERLIKYGSQALSNSELIAIILGTGGRNENVLSLSSRILKQCEGLNGLLTLTPEEIMTLKGIGSAKAAKIIAVGELAKRFKAYKSGDVYIIKSPGDVAGLVMEEMKYFKEEHLRVIMLNTKNIVISCKDVSIGSLNSAIVHPREVFCEALKKNSASIVICHNHPSGDPTPSSEDINVTKRLKQCGIILGINLLDHLIIGHSNYISLKEKNIL</sequence>